<protein>
    <recommendedName>
        <fullName evidence="2">Flap endonuclease 1</fullName>
        <shortName evidence="2">FEN-1</shortName>
        <ecNumber evidence="2">3.1.-.-</ecNumber>
    </recommendedName>
    <alternativeName>
        <fullName evidence="2">Flap structure-specific endonuclease 1</fullName>
    </alternativeName>
</protein>
<feature type="chain" id="PRO_1000130405" description="Flap endonuclease 1">
    <location>
        <begin position="1"/>
        <end position="349"/>
    </location>
</feature>
<feature type="region of interest" description="N-domain">
    <location>
        <begin position="1"/>
        <end position="102"/>
    </location>
</feature>
<feature type="region of interest" description="I-domain">
    <location>
        <begin position="120"/>
        <end position="261"/>
    </location>
</feature>
<feature type="binding site" evidence="2">
    <location>
        <position position="31"/>
    </location>
    <ligand>
        <name>Mg(2+)</name>
        <dbReference type="ChEBI" id="CHEBI:18420"/>
        <label>1</label>
    </ligand>
</feature>
<feature type="binding site" evidence="2">
    <location>
        <position position="84"/>
    </location>
    <ligand>
        <name>Mg(2+)</name>
        <dbReference type="ChEBI" id="CHEBI:18420"/>
        <label>1</label>
    </ligand>
</feature>
<feature type="binding site" evidence="2">
    <location>
        <position position="156"/>
    </location>
    <ligand>
        <name>Mg(2+)</name>
        <dbReference type="ChEBI" id="CHEBI:18420"/>
        <label>1</label>
    </ligand>
</feature>
<feature type="binding site" evidence="2">
    <location>
        <position position="158"/>
    </location>
    <ligand>
        <name>Mg(2+)</name>
        <dbReference type="ChEBI" id="CHEBI:18420"/>
        <label>1</label>
    </ligand>
</feature>
<feature type="binding site" evidence="2">
    <location>
        <position position="177"/>
    </location>
    <ligand>
        <name>Mg(2+)</name>
        <dbReference type="ChEBI" id="CHEBI:18420"/>
        <label>2</label>
    </ligand>
</feature>
<feature type="binding site" evidence="2">
    <location>
        <position position="179"/>
    </location>
    <ligand>
        <name>Mg(2+)</name>
        <dbReference type="ChEBI" id="CHEBI:18420"/>
        <label>2</label>
    </ligand>
</feature>
<feature type="binding site" evidence="2">
    <location>
        <position position="239"/>
    </location>
    <ligand>
        <name>Mg(2+)</name>
        <dbReference type="ChEBI" id="CHEBI:18420"/>
        <label>2</label>
    </ligand>
</feature>
<proteinExistence type="inferred from homology"/>
<dbReference type="EC" id="3.1.-.-" evidence="2"/>
<dbReference type="EMBL" id="CP001014">
    <property type="protein sequence ID" value="ACB40900.1"/>
    <property type="molecule type" value="Genomic_DNA"/>
</dbReference>
<dbReference type="RefSeq" id="WP_012351319.1">
    <property type="nucleotide sequence ID" value="NC_010525.1"/>
</dbReference>
<dbReference type="SMR" id="B1YC46"/>
<dbReference type="STRING" id="444157.Tneu_1985"/>
<dbReference type="GeneID" id="6165667"/>
<dbReference type="KEGG" id="tne:Tneu_1985"/>
<dbReference type="eggNOG" id="arCOG04050">
    <property type="taxonomic scope" value="Archaea"/>
</dbReference>
<dbReference type="HOGENOM" id="CLU_032444_0_0_2"/>
<dbReference type="OrthoDB" id="9593at2157"/>
<dbReference type="Proteomes" id="UP000001694">
    <property type="component" value="Chromosome"/>
</dbReference>
<dbReference type="GO" id="GO:0008409">
    <property type="term" value="F:5'-3' exonuclease activity"/>
    <property type="evidence" value="ECO:0007669"/>
    <property type="project" value="UniProtKB-UniRule"/>
</dbReference>
<dbReference type="GO" id="GO:0017108">
    <property type="term" value="F:5'-flap endonuclease activity"/>
    <property type="evidence" value="ECO:0007669"/>
    <property type="project" value="UniProtKB-UniRule"/>
</dbReference>
<dbReference type="GO" id="GO:0003677">
    <property type="term" value="F:DNA binding"/>
    <property type="evidence" value="ECO:0007669"/>
    <property type="project" value="UniProtKB-UniRule"/>
</dbReference>
<dbReference type="GO" id="GO:0000287">
    <property type="term" value="F:magnesium ion binding"/>
    <property type="evidence" value="ECO:0007669"/>
    <property type="project" value="UniProtKB-UniRule"/>
</dbReference>
<dbReference type="GO" id="GO:0006281">
    <property type="term" value="P:DNA repair"/>
    <property type="evidence" value="ECO:0007669"/>
    <property type="project" value="UniProtKB-UniRule"/>
</dbReference>
<dbReference type="GO" id="GO:0043137">
    <property type="term" value="P:DNA replication, removal of RNA primer"/>
    <property type="evidence" value="ECO:0007669"/>
    <property type="project" value="UniProtKB-UniRule"/>
</dbReference>
<dbReference type="CDD" id="cd09867">
    <property type="entry name" value="PIN_FEN1"/>
    <property type="match status" value="1"/>
</dbReference>
<dbReference type="FunFam" id="1.10.150.20:FF:000087">
    <property type="entry name" value="Flap endonuclease 1"/>
    <property type="match status" value="1"/>
</dbReference>
<dbReference type="FunFam" id="3.40.50.1010:FF:000016">
    <property type="entry name" value="Flap endonuclease 1"/>
    <property type="match status" value="1"/>
</dbReference>
<dbReference type="Gene3D" id="1.10.150.20">
    <property type="entry name" value="5' to 3' exonuclease, C-terminal subdomain"/>
    <property type="match status" value="1"/>
</dbReference>
<dbReference type="Gene3D" id="3.40.50.1010">
    <property type="entry name" value="5'-nuclease"/>
    <property type="match status" value="1"/>
</dbReference>
<dbReference type="HAMAP" id="MF_00614">
    <property type="entry name" value="Fen"/>
    <property type="match status" value="1"/>
</dbReference>
<dbReference type="InterPro" id="IPR036279">
    <property type="entry name" value="5-3_exonuclease_C_sf"/>
</dbReference>
<dbReference type="InterPro" id="IPR023426">
    <property type="entry name" value="Flap_endonuc"/>
</dbReference>
<dbReference type="InterPro" id="IPR019973">
    <property type="entry name" value="Flap_endonuc_arc"/>
</dbReference>
<dbReference type="InterPro" id="IPR008918">
    <property type="entry name" value="HhH2"/>
</dbReference>
<dbReference type="InterPro" id="IPR029060">
    <property type="entry name" value="PIN-like_dom_sf"/>
</dbReference>
<dbReference type="InterPro" id="IPR006086">
    <property type="entry name" value="XPG-I_dom"/>
</dbReference>
<dbReference type="InterPro" id="IPR006084">
    <property type="entry name" value="XPG/Rad2"/>
</dbReference>
<dbReference type="InterPro" id="IPR019974">
    <property type="entry name" value="XPG_CS"/>
</dbReference>
<dbReference type="InterPro" id="IPR006085">
    <property type="entry name" value="XPG_DNA_repair_N"/>
</dbReference>
<dbReference type="NCBIfam" id="TIGR03674">
    <property type="entry name" value="fen_arch"/>
    <property type="match status" value="1"/>
</dbReference>
<dbReference type="PANTHER" id="PTHR11081:SF9">
    <property type="entry name" value="FLAP ENDONUCLEASE 1"/>
    <property type="match status" value="1"/>
</dbReference>
<dbReference type="PANTHER" id="PTHR11081">
    <property type="entry name" value="FLAP ENDONUCLEASE FAMILY MEMBER"/>
    <property type="match status" value="1"/>
</dbReference>
<dbReference type="Pfam" id="PF00867">
    <property type="entry name" value="XPG_I"/>
    <property type="match status" value="1"/>
</dbReference>
<dbReference type="Pfam" id="PF00752">
    <property type="entry name" value="XPG_N"/>
    <property type="match status" value="1"/>
</dbReference>
<dbReference type="PRINTS" id="PR00853">
    <property type="entry name" value="XPGRADSUPER"/>
</dbReference>
<dbReference type="SMART" id="SM00279">
    <property type="entry name" value="HhH2"/>
    <property type="match status" value="1"/>
</dbReference>
<dbReference type="SMART" id="SM00484">
    <property type="entry name" value="XPGI"/>
    <property type="match status" value="1"/>
</dbReference>
<dbReference type="SMART" id="SM00485">
    <property type="entry name" value="XPGN"/>
    <property type="match status" value="1"/>
</dbReference>
<dbReference type="SUPFAM" id="SSF47807">
    <property type="entry name" value="5' to 3' exonuclease, C-terminal subdomain"/>
    <property type="match status" value="1"/>
</dbReference>
<dbReference type="SUPFAM" id="SSF88723">
    <property type="entry name" value="PIN domain-like"/>
    <property type="match status" value="1"/>
</dbReference>
<dbReference type="PROSITE" id="PS00841">
    <property type="entry name" value="XPG_1"/>
    <property type="match status" value="1"/>
</dbReference>
<name>FEN_PYRNV</name>
<accession>B1YC46</accession>
<comment type="function">
    <text evidence="1">Structure-specific nuclease with 5'-flap endonuclease and 5'-3' exonuclease activities involved in DNA replication and repair. During DNA replication, cleaves the 5'-overhanging flap structure that is generated by displacement synthesis when DNA polymerase encounters the 5'-end of a downstream Okazaki fragment. Binds the unpaired 3'-DNA end and kinks the DNA to facilitate 5' cleavage specificity. Cleaves one nucleotide into the double-stranded DNA from the junction in flap DNA, leaving a nick for ligation. Also involved in the base excision repair (BER) pathway. Acts as a genome stabilization factor that prevents flaps from equilibrating into structures that lead to duplications and deletions. Also possesses 5'-3' exonuclease activity on nicked or gapped double-stranded DNA (By similarity).</text>
</comment>
<comment type="cofactor">
    <cofactor evidence="2">
        <name>Mg(2+)</name>
        <dbReference type="ChEBI" id="CHEBI:18420"/>
    </cofactor>
    <text evidence="2">Binds 2 magnesium ions per subunit. They probably participate in the reaction catalyzed by the enzyme. May bind an additional third magnesium ion after substrate binding.</text>
</comment>
<comment type="subunit">
    <text evidence="2">Interacts with PCNA. PCNA stimulates the nuclease activity without altering cleavage specificity.</text>
</comment>
<comment type="similarity">
    <text evidence="2">Belongs to the XPG/RAD2 endonuclease family. FEN1 subfamily.</text>
</comment>
<keyword id="KW-0227">DNA damage</keyword>
<keyword id="KW-0234">DNA repair</keyword>
<keyword id="KW-0235">DNA replication</keyword>
<keyword id="KW-0255">Endonuclease</keyword>
<keyword id="KW-0269">Exonuclease</keyword>
<keyword id="KW-0378">Hydrolase</keyword>
<keyword id="KW-0460">Magnesium</keyword>
<keyword id="KW-0479">Metal-binding</keyword>
<keyword id="KW-0540">Nuclease</keyword>
<organism>
    <name type="scientific">Pyrobaculum neutrophilum (strain DSM 2338 / JCM 9278 / NBRC 100436 / V24Sta)</name>
    <name type="common">Thermoproteus neutrophilus</name>
    <dbReference type="NCBI Taxonomy" id="444157"/>
    <lineage>
        <taxon>Archaea</taxon>
        <taxon>Thermoproteota</taxon>
        <taxon>Thermoprotei</taxon>
        <taxon>Thermoproteales</taxon>
        <taxon>Thermoproteaceae</taxon>
        <taxon>Pyrobaculum</taxon>
    </lineage>
</organism>
<sequence length="349" mass="39152">MGVTELGKLIGREARREIKLENLAGRCIALDAYNALYQFLASIRQPDGTPLMDRQGRVTSHLSGLFYRTINLMEAGIKPVYVFDGKPPEFKLAEIEARRRVKEKAMEEVVKAIREGKRDDVAKYMKRVIFLTNEMVEDAKRLLTYMGVPWVQAPSEGEAQAAHMAKRGHCWAVGSQDYDSLLFGSPRLVRNLAVSPKRRSGEEVVEVSPEVVELDSVLKALKLKGREQLIDVAILLGTDYNPDGVPGVGPQKALKLVLEFGSLEKMLDTVLRGVSFPVDPLEIKRFFLNPPVTEEYALELKNVDERGLVNFLVGEHDFSEERVAKAVERLKKARARQKTSSLDSFFHGA</sequence>
<evidence type="ECO:0000250" key="1"/>
<evidence type="ECO:0000255" key="2">
    <source>
        <dbReference type="HAMAP-Rule" id="MF_00614"/>
    </source>
</evidence>
<gene>
    <name evidence="2" type="primary">fen</name>
    <name type="ordered locus">Tneu_1985</name>
</gene>
<reference key="1">
    <citation type="submission" date="2008-03" db="EMBL/GenBank/DDBJ databases">
        <title>Complete sequence of Thermoproteus neutrophilus V24Sta.</title>
        <authorList>
            <consortium name="US DOE Joint Genome Institute"/>
            <person name="Copeland A."/>
            <person name="Lucas S."/>
            <person name="Lapidus A."/>
            <person name="Glavina del Rio T."/>
            <person name="Dalin E."/>
            <person name="Tice H."/>
            <person name="Bruce D."/>
            <person name="Goodwin L."/>
            <person name="Pitluck S."/>
            <person name="Sims D."/>
            <person name="Brettin T."/>
            <person name="Detter J.C."/>
            <person name="Han C."/>
            <person name="Kuske C.R."/>
            <person name="Schmutz J."/>
            <person name="Larimer F."/>
            <person name="Land M."/>
            <person name="Hauser L."/>
            <person name="Kyrpides N."/>
            <person name="Mikhailova N."/>
            <person name="Biddle J.F."/>
            <person name="Zhang Z."/>
            <person name="Fitz-Gibbon S.T."/>
            <person name="Lowe T.M."/>
            <person name="Saltikov C."/>
            <person name="House C.H."/>
            <person name="Richardson P."/>
        </authorList>
    </citation>
    <scope>NUCLEOTIDE SEQUENCE [LARGE SCALE GENOMIC DNA]</scope>
    <source>
        <strain>DSM 2338 / JCM 9278 / NBRC 100436 / V24Sta</strain>
    </source>
</reference>